<protein>
    <recommendedName>
        <fullName evidence="6">Phospholipase A2</fullName>
        <shortName evidence="6">PLA2</shortName>
        <ecNumber>3.1.1.4</ecNumber>
    </recommendedName>
    <alternativeName>
        <fullName evidence="1">Phosphatidylcholine 2-acylhydrolase 10</fullName>
    </alternativeName>
</protein>
<reference key="1">
    <citation type="journal article" date="2017" name="Curr. Biol.">
        <title>The evolution of fangs, venom, and mimicry systems in blenny fishes.</title>
        <authorList>
            <person name="Casewell N.R."/>
            <person name="Visser J.C."/>
            <person name="Baumann K."/>
            <person name="Dobson J."/>
            <person name="Han H."/>
            <person name="Kuruppu S."/>
            <person name="Morgan M."/>
            <person name="Romilio A."/>
            <person name="Weisbecker V."/>
            <person name="Ali S.A."/>
            <person name="Debono J."/>
            <person name="Koludarov I."/>
            <person name="Que I."/>
            <person name="Bird G.C."/>
            <person name="Cooke G.M."/>
            <person name="Nouwens A."/>
            <person name="Hodgson W.C."/>
            <person name="Wagstaff S.C."/>
            <person name="Cheney K.L."/>
            <person name="Vetter I."/>
            <person name="van der Weerd L."/>
            <person name="Richardson M.K."/>
            <person name="Fry B.G."/>
        </authorList>
    </citation>
    <scope>NUCLEOTIDE SEQUENCE [MRNA]</scope>
    <scope>TISSUE SPECIFICITY</scope>
    <source>
        <tissue>Venom gland</tissue>
    </source>
</reference>
<sequence length="152" mass="17012">MAACHRILLLLSVAVASGAAQKPPLTKRGLLEFGGIITCSTGRSPLSYVMYGCYCGLGGKGWPRDKADCCHEHDCCYGEAETLGCQTKTDQYRWKCEDKKVECDDLNDKCEKFLCKCDRDAAKCLEKAPYNQKYLFWPSFMCGSEEPKCSIY</sequence>
<keyword id="KW-0106">Calcium</keyword>
<keyword id="KW-1015">Disulfide bond</keyword>
<keyword id="KW-0378">Hydrolase</keyword>
<keyword id="KW-0442">Lipid degradation</keyword>
<keyword id="KW-0443">Lipid metabolism</keyword>
<keyword id="KW-0479">Metal-binding</keyword>
<keyword id="KW-0964">Secreted</keyword>
<keyword id="KW-0732">Signal</keyword>
<keyword id="KW-0800">Toxin</keyword>
<evidence type="ECO:0000250" key="1">
    <source>
        <dbReference type="UniProtKB" id="O15496"/>
    </source>
</evidence>
<evidence type="ECO:0000255" key="2"/>
<evidence type="ECO:0000255" key="3">
    <source>
        <dbReference type="PROSITE-ProRule" id="PRU10035"/>
    </source>
</evidence>
<evidence type="ECO:0000255" key="4">
    <source>
        <dbReference type="PROSITE-ProRule" id="PRU10036"/>
    </source>
</evidence>
<evidence type="ECO:0000269" key="5">
    <source>
    </source>
</evidence>
<evidence type="ECO:0000303" key="6">
    <source>
    </source>
</evidence>
<evidence type="ECO:0000305" key="7"/>
<evidence type="ECO:0000305" key="8">
    <source>
    </source>
</evidence>
<name>PA2V_MEIAT</name>
<feature type="signal peptide" evidence="2">
    <location>
        <begin position="1"/>
        <end position="20"/>
    </location>
</feature>
<feature type="chain" id="PRO_0000440254" description="Phospholipase A2">
    <location>
        <begin position="21"/>
        <end position="152"/>
    </location>
</feature>
<feature type="active site" evidence="1">
    <location>
        <position position="73"/>
    </location>
</feature>
<feature type="active site" evidence="1">
    <location>
        <position position="118"/>
    </location>
</feature>
<feature type="binding site" evidence="1">
    <location>
        <position position="56"/>
    </location>
    <ligand>
        <name>Ca(2+)</name>
        <dbReference type="ChEBI" id="CHEBI:29108"/>
    </ligand>
</feature>
<feature type="binding site" evidence="1">
    <location>
        <position position="58"/>
    </location>
    <ligand>
        <name>Ca(2+)</name>
        <dbReference type="ChEBI" id="CHEBI:29108"/>
    </ligand>
</feature>
<feature type="binding site" evidence="1">
    <location>
        <position position="74"/>
    </location>
    <ligand>
        <name>Ca(2+)</name>
        <dbReference type="ChEBI" id="CHEBI:29108"/>
    </ligand>
</feature>
<feature type="disulfide bond" evidence="1">
    <location>
        <begin position="39"/>
        <end position="96"/>
    </location>
</feature>
<feature type="disulfide bond" evidence="1">
    <location>
        <begin position="53"/>
        <end position="142"/>
    </location>
</feature>
<feature type="disulfide bond" evidence="1">
    <location>
        <begin position="55"/>
        <end position="70"/>
    </location>
</feature>
<feature type="disulfide bond" evidence="1">
    <location>
        <begin position="69"/>
        <end position="124"/>
    </location>
</feature>
<feature type="disulfide bond" evidence="1">
    <location>
        <begin position="75"/>
        <end position="149"/>
    </location>
</feature>
<feature type="disulfide bond" evidence="1">
    <location>
        <begin position="76"/>
        <end position="117"/>
    </location>
</feature>
<feature type="disulfide bond" evidence="1">
    <location>
        <begin position="85"/>
        <end position="110"/>
    </location>
</feature>
<feature type="disulfide bond" evidence="1">
    <location>
        <begin position="103"/>
        <end position="115"/>
    </location>
</feature>
<accession>P0DP54</accession>
<organism>
    <name type="scientific">Meiacanthus atrodorsalis</name>
    <name type="common">Forktail blenny</name>
    <name type="synonym">Petroscirtes atrodorsalis</name>
    <dbReference type="NCBI Taxonomy" id="1405650"/>
    <lineage>
        <taxon>Eukaryota</taxon>
        <taxon>Metazoa</taxon>
        <taxon>Chordata</taxon>
        <taxon>Craniata</taxon>
        <taxon>Vertebrata</taxon>
        <taxon>Euteleostomi</taxon>
        <taxon>Actinopterygii</taxon>
        <taxon>Neopterygii</taxon>
        <taxon>Teleostei</taxon>
        <taxon>Neoteleostei</taxon>
        <taxon>Acanthomorphata</taxon>
        <taxon>Ovalentaria</taxon>
        <taxon>Blenniimorphae</taxon>
        <taxon>Blenniiformes</taxon>
        <taxon>Blennioidei</taxon>
        <taxon>Blenniidae</taxon>
        <taxon>Blenniinae</taxon>
        <taxon>Meiacanthus</taxon>
    </lineage>
</organism>
<proteinExistence type="evidence at transcript level"/>
<comment type="function">
    <text evidence="1">PA2 catalyzes the calcium-dependent hydrolysis of the 2-acyl groups in 3-sn-phosphoglycerides.</text>
</comment>
<comment type="catalytic activity">
    <reaction evidence="3 4">
        <text>a 1,2-diacyl-sn-glycero-3-phosphocholine + H2O = a 1-acyl-sn-glycero-3-phosphocholine + a fatty acid + H(+)</text>
        <dbReference type="Rhea" id="RHEA:15801"/>
        <dbReference type="ChEBI" id="CHEBI:15377"/>
        <dbReference type="ChEBI" id="CHEBI:15378"/>
        <dbReference type="ChEBI" id="CHEBI:28868"/>
        <dbReference type="ChEBI" id="CHEBI:57643"/>
        <dbReference type="ChEBI" id="CHEBI:58168"/>
        <dbReference type="EC" id="3.1.1.4"/>
    </reaction>
</comment>
<comment type="subcellular location">
    <subcellularLocation>
        <location evidence="8">Secreted</location>
    </subcellularLocation>
</comment>
<comment type="tissue specificity">
    <text evidence="5">Expressed by the venom gland. Heavily expressed in the venom gland transcriptome.</text>
</comment>
<comment type="similarity">
    <text evidence="7">Belongs to the phospholipase A2 family.</text>
</comment>
<dbReference type="EC" id="3.1.1.4"/>
<dbReference type="SMR" id="P0DP54"/>
<dbReference type="GO" id="GO:0005576">
    <property type="term" value="C:extracellular region"/>
    <property type="evidence" value="ECO:0007669"/>
    <property type="project" value="UniProtKB-SubCell"/>
</dbReference>
<dbReference type="GO" id="GO:0005509">
    <property type="term" value="F:calcium ion binding"/>
    <property type="evidence" value="ECO:0007669"/>
    <property type="project" value="InterPro"/>
</dbReference>
<dbReference type="GO" id="GO:0047498">
    <property type="term" value="F:calcium-dependent phospholipase A2 activity"/>
    <property type="evidence" value="ECO:0007669"/>
    <property type="project" value="TreeGrafter"/>
</dbReference>
<dbReference type="GO" id="GO:0005543">
    <property type="term" value="F:phospholipid binding"/>
    <property type="evidence" value="ECO:0007669"/>
    <property type="project" value="TreeGrafter"/>
</dbReference>
<dbReference type="GO" id="GO:0090729">
    <property type="term" value="F:toxin activity"/>
    <property type="evidence" value="ECO:0007669"/>
    <property type="project" value="UniProtKB-KW"/>
</dbReference>
<dbReference type="GO" id="GO:0050482">
    <property type="term" value="P:arachidonate secretion"/>
    <property type="evidence" value="ECO:0007669"/>
    <property type="project" value="InterPro"/>
</dbReference>
<dbReference type="GO" id="GO:0016042">
    <property type="term" value="P:lipid catabolic process"/>
    <property type="evidence" value="ECO:0007669"/>
    <property type="project" value="UniProtKB-KW"/>
</dbReference>
<dbReference type="GO" id="GO:0006644">
    <property type="term" value="P:phospholipid metabolic process"/>
    <property type="evidence" value="ECO:0007669"/>
    <property type="project" value="InterPro"/>
</dbReference>
<dbReference type="CDD" id="cd00125">
    <property type="entry name" value="PLA2c"/>
    <property type="match status" value="1"/>
</dbReference>
<dbReference type="FunFam" id="1.20.90.10:FF:000001">
    <property type="entry name" value="Basic phospholipase A2 homolog"/>
    <property type="match status" value="1"/>
</dbReference>
<dbReference type="Gene3D" id="1.20.90.10">
    <property type="entry name" value="Phospholipase A2 domain"/>
    <property type="match status" value="1"/>
</dbReference>
<dbReference type="InterPro" id="IPR001211">
    <property type="entry name" value="PLipase_A2"/>
</dbReference>
<dbReference type="InterPro" id="IPR033112">
    <property type="entry name" value="PLipase_A2_Asp_AS"/>
</dbReference>
<dbReference type="InterPro" id="IPR016090">
    <property type="entry name" value="PLipase_A2_dom"/>
</dbReference>
<dbReference type="InterPro" id="IPR036444">
    <property type="entry name" value="PLipase_A2_dom_sf"/>
</dbReference>
<dbReference type="InterPro" id="IPR033113">
    <property type="entry name" value="PLipase_A2_His_AS"/>
</dbReference>
<dbReference type="PANTHER" id="PTHR11716:SF4">
    <property type="entry name" value="GROUP 10 SECRETORY PHOSPHOLIPASE A2"/>
    <property type="match status" value="1"/>
</dbReference>
<dbReference type="PANTHER" id="PTHR11716">
    <property type="entry name" value="PHOSPHOLIPASE A2 FAMILY MEMBER"/>
    <property type="match status" value="1"/>
</dbReference>
<dbReference type="Pfam" id="PF00068">
    <property type="entry name" value="Phospholip_A2_1"/>
    <property type="match status" value="1"/>
</dbReference>
<dbReference type="PRINTS" id="PR00389">
    <property type="entry name" value="PHPHLIPASEA2"/>
</dbReference>
<dbReference type="SMART" id="SM00085">
    <property type="entry name" value="PA2c"/>
    <property type="match status" value="1"/>
</dbReference>
<dbReference type="SUPFAM" id="SSF48619">
    <property type="entry name" value="Phospholipase A2, PLA2"/>
    <property type="match status" value="1"/>
</dbReference>
<dbReference type="PROSITE" id="PS00119">
    <property type="entry name" value="PA2_ASP"/>
    <property type="match status" value="1"/>
</dbReference>
<dbReference type="PROSITE" id="PS00118">
    <property type="entry name" value="PA2_HIS"/>
    <property type="match status" value="1"/>
</dbReference>